<evidence type="ECO:0000255" key="1">
    <source>
        <dbReference type="HAMAP-Rule" id="MF_01601"/>
    </source>
</evidence>
<protein>
    <recommendedName>
        <fullName evidence="1">ADP-L-glycero-D-manno-heptose-6-epimerase</fullName>
        <ecNumber evidence="1">5.1.3.20</ecNumber>
    </recommendedName>
    <alternativeName>
        <fullName evidence="1">ADP-L-glycero-beta-D-manno-heptose-6-epimerase</fullName>
        <shortName evidence="1">ADP-glyceromanno-heptose 6-epimerase</shortName>
        <shortName evidence="1">ADP-hep 6-epimerase</shortName>
        <shortName evidence="1">AGME</shortName>
    </alternativeName>
</protein>
<reference key="1">
    <citation type="submission" date="2006-08" db="EMBL/GenBank/DDBJ databases">
        <title>Complete sequence of chromosome 1 of Burkholderia cepacia AMMD.</title>
        <authorList>
            <person name="Copeland A."/>
            <person name="Lucas S."/>
            <person name="Lapidus A."/>
            <person name="Barry K."/>
            <person name="Detter J.C."/>
            <person name="Glavina del Rio T."/>
            <person name="Hammon N."/>
            <person name="Israni S."/>
            <person name="Pitluck S."/>
            <person name="Bruce D."/>
            <person name="Chain P."/>
            <person name="Malfatti S."/>
            <person name="Shin M."/>
            <person name="Vergez L."/>
            <person name="Schmutz J."/>
            <person name="Larimer F."/>
            <person name="Land M."/>
            <person name="Hauser L."/>
            <person name="Kyrpides N."/>
            <person name="Kim E."/>
            <person name="Parke J."/>
            <person name="Coenye T."/>
            <person name="Konstantinidis K."/>
            <person name="Ramette A."/>
            <person name="Tiedje J."/>
            <person name="Richardson P."/>
        </authorList>
    </citation>
    <scope>NUCLEOTIDE SEQUENCE [LARGE SCALE GENOMIC DNA]</scope>
    <source>
        <strain>ATCC BAA-244 / DSM 16087 / CCUG 44356 / LMG 19182 / AMMD</strain>
    </source>
</reference>
<feature type="chain" id="PRO_1000069344" description="ADP-L-glycero-D-manno-heptose-6-epimerase">
    <location>
        <begin position="1"/>
        <end position="330"/>
    </location>
</feature>
<feature type="active site" description="Proton acceptor" evidence="1">
    <location>
        <position position="139"/>
    </location>
</feature>
<feature type="active site" description="Proton acceptor" evidence="1">
    <location>
        <position position="177"/>
    </location>
</feature>
<feature type="binding site" evidence="1">
    <location>
        <begin position="11"/>
        <end position="12"/>
    </location>
    <ligand>
        <name>NADP(+)</name>
        <dbReference type="ChEBI" id="CHEBI:58349"/>
    </ligand>
</feature>
<feature type="binding site" evidence="1">
    <location>
        <begin position="32"/>
        <end position="33"/>
    </location>
    <ligand>
        <name>NADP(+)</name>
        <dbReference type="ChEBI" id="CHEBI:58349"/>
    </ligand>
</feature>
<feature type="binding site" evidence="1">
    <location>
        <position position="39"/>
    </location>
    <ligand>
        <name>NADP(+)</name>
        <dbReference type="ChEBI" id="CHEBI:58349"/>
    </ligand>
</feature>
<feature type="binding site" evidence="1">
    <location>
        <position position="54"/>
    </location>
    <ligand>
        <name>NADP(+)</name>
        <dbReference type="ChEBI" id="CHEBI:58349"/>
    </ligand>
</feature>
<feature type="binding site" evidence="1">
    <location>
        <begin position="75"/>
        <end position="79"/>
    </location>
    <ligand>
        <name>NADP(+)</name>
        <dbReference type="ChEBI" id="CHEBI:58349"/>
    </ligand>
</feature>
<feature type="binding site" evidence="1">
    <location>
        <position position="92"/>
    </location>
    <ligand>
        <name>NADP(+)</name>
        <dbReference type="ChEBI" id="CHEBI:58349"/>
    </ligand>
</feature>
<feature type="binding site" evidence="1">
    <location>
        <position position="143"/>
    </location>
    <ligand>
        <name>NADP(+)</name>
        <dbReference type="ChEBI" id="CHEBI:58349"/>
    </ligand>
</feature>
<feature type="binding site" evidence="1">
    <location>
        <position position="168"/>
    </location>
    <ligand>
        <name>substrate</name>
    </ligand>
</feature>
<feature type="binding site" evidence="1">
    <location>
        <position position="169"/>
    </location>
    <ligand>
        <name>NADP(+)</name>
        <dbReference type="ChEBI" id="CHEBI:58349"/>
    </ligand>
</feature>
<feature type="binding site" evidence="1">
    <location>
        <position position="177"/>
    </location>
    <ligand>
        <name>NADP(+)</name>
        <dbReference type="ChEBI" id="CHEBI:58349"/>
    </ligand>
</feature>
<feature type="binding site" evidence="1">
    <location>
        <position position="179"/>
    </location>
    <ligand>
        <name>substrate</name>
    </ligand>
</feature>
<feature type="binding site" evidence="1">
    <location>
        <position position="186"/>
    </location>
    <ligand>
        <name>substrate</name>
    </ligand>
</feature>
<feature type="binding site" evidence="1">
    <location>
        <begin position="200"/>
        <end position="203"/>
    </location>
    <ligand>
        <name>substrate</name>
    </ligand>
</feature>
<feature type="binding site" evidence="1">
    <location>
        <position position="213"/>
    </location>
    <ligand>
        <name>substrate</name>
    </ligand>
</feature>
<feature type="binding site" evidence="1">
    <location>
        <position position="292"/>
    </location>
    <ligand>
        <name>substrate</name>
    </ligand>
</feature>
<comment type="function">
    <text evidence="1">Catalyzes the interconversion between ADP-D-glycero-beta-D-manno-heptose and ADP-L-glycero-beta-D-manno-heptose via an epimerization at carbon 6 of the heptose.</text>
</comment>
<comment type="catalytic activity">
    <reaction evidence="1">
        <text>ADP-D-glycero-beta-D-manno-heptose = ADP-L-glycero-beta-D-manno-heptose</text>
        <dbReference type="Rhea" id="RHEA:17577"/>
        <dbReference type="ChEBI" id="CHEBI:59967"/>
        <dbReference type="ChEBI" id="CHEBI:61506"/>
        <dbReference type="EC" id="5.1.3.20"/>
    </reaction>
</comment>
<comment type="cofactor">
    <cofactor evidence="1">
        <name>NADP(+)</name>
        <dbReference type="ChEBI" id="CHEBI:58349"/>
    </cofactor>
    <text evidence="1">Binds 1 NADP(+) per subunit.</text>
</comment>
<comment type="pathway">
    <text evidence="1">Nucleotide-sugar biosynthesis; ADP-L-glycero-beta-D-manno-heptose biosynthesis; ADP-L-glycero-beta-D-manno-heptose from D-glycero-beta-D-manno-heptose 7-phosphate: step 4/4.</text>
</comment>
<comment type="subunit">
    <text evidence="1">Homopentamer.</text>
</comment>
<comment type="domain">
    <text evidence="1">Contains a large N-terminal NADP-binding domain, and a smaller C-terminal substrate-binding domain.</text>
</comment>
<comment type="similarity">
    <text evidence="1">Belongs to the NAD(P)-dependent epimerase/dehydratase family. HldD subfamily.</text>
</comment>
<keyword id="KW-0119">Carbohydrate metabolism</keyword>
<keyword id="KW-0413">Isomerase</keyword>
<keyword id="KW-0521">NADP</keyword>
<accession>Q0BH85</accession>
<sequence length="330" mass="37060">MTVIVTGAAGFIGANIVKALNERGESRIIAVDNLTRADKFRNLVDCEIDDYLDKTEFVERFTRGDFGKVRAVFHEGACSDTMETDGRYMMDNNFRYSRAVLDACLAQGAQFLYASSAAIYGGSTRFVEEREVEAPLNVYGYSKFLFDQVIRRVLPSAKSQIAGFRYFNVYGPRETHKGRMASVAFHNFNQFRAEGKVKLFGEYNGYAPGEQTRDFVSVEDVAKVNLFFFDHPEKSGIFNLGTGRAQPFNDIASTVVNTLRALDNLPPLTLAQQVEQGLIEYVAFPDALRGKYQCFTQADQTKLRSAGYDAPFLTVQEGVDRYVRWLSGQV</sequence>
<proteinExistence type="inferred from homology"/>
<dbReference type="EC" id="5.1.3.20" evidence="1"/>
<dbReference type="EMBL" id="CP000440">
    <property type="protein sequence ID" value="ABI86488.1"/>
    <property type="molecule type" value="Genomic_DNA"/>
</dbReference>
<dbReference type="RefSeq" id="WP_011656283.1">
    <property type="nucleotide sequence ID" value="NC_008390.1"/>
</dbReference>
<dbReference type="SMR" id="Q0BH85"/>
<dbReference type="GeneID" id="93083662"/>
<dbReference type="KEGG" id="bam:Bamb_0929"/>
<dbReference type="PATRIC" id="fig|339670.21.peg.645"/>
<dbReference type="eggNOG" id="COG0451">
    <property type="taxonomic scope" value="Bacteria"/>
</dbReference>
<dbReference type="UniPathway" id="UPA00356">
    <property type="reaction ID" value="UER00440"/>
</dbReference>
<dbReference type="Proteomes" id="UP000000662">
    <property type="component" value="Chromosome 1"/>
</dbReference>
<dbReference type="GO" id="GO:0008712">
    <property type="term" value="F:ADP-glyceromanno-heptose 6-epimerase activity"/>
    <property type="evidence" value="ECO:0007669"/>
    <property type="project" value="UniProtKB-UniRule"/>
</dbReference>
<dbReference type="GO" id="GO:0050661">
    <property type="term" value="F:NADP binding"/>
    <property type="evidence" value="ECO:0007669"/>
    <property type="project" value="InterPro"/>
</dbReference>
<dbReference type="GO" id="GO:0097171">
    <property type="term" value="P:ADP-L-glycero-beta-D-manno-heptose biosynthetic process"/>
    <property type="evidence" value="ECO:0007669"/>
    <property type="project" value="UniProtKB-UniPathway"/>
</dbReference>
<dbReference type="GO" id="GO:0005975">
    <property type="term" value="P:carbohydrate metabolic process"/>
    <property type="evidence" value="ECO:0007669"/>
    <property type="project" value="UniProtKB-UniRule"/>
</dbReference>
<dbReference type="CDD" id="cd05248">
    <property type="entry name" value="ADP_GME_SDR_e"/>
    <property type="match status" value="1"/>
</dbReference>
<dbReference type="Gene3D" id="3.40.50.720">
    <property type="entry name" value="NAD(P)-binding Rossmann-like Domain"/>
    <property type="match status" value="1"/>
</dbReference>
<dbReference type="Gene3D" id="3.90.25.10">
    <property type="entry name" value="UDP-galactose 4-epimerase, domain 1"/>
    <property type="match status" value="1"/>
</dbReference>
<dbReference type="HAMAP" id="MF_01601">
    <property type="entry name" value="Heptose_epimerase"/>
    <property type="match status" value="1"/>
</dbReference>
<dbReference type="InterPro" id="IPR001509">
    <property type="entry name" value="Epimerase_deHydtase"/>
</dbReference>
<dbReference type="InterPro" id="IPR011912">
    <property type="entry name" value="Heptose_epim"/>
</dbReference>
<dbReference type="InterPro" id="IPR036291">
    <property type="entry name" value="NAD(P)-bd_dom_sf"/>
</dbReference>
<dbReference type="NCBIfam" id="TIGR02197">
    <property type="entry name" value="heptose_epim"/>
    <property type="match status" value="1"/>
</dbReference>
<dbReference type="PANTHER" id="PTHR43103:SF3">
    <property type="entry name" value="ADP-L-GLYCERO-D-MANNO-HEPTOSE-6-EPIMERASE"/>
    <property type="match status" value="1"/>
</dbReference>
<dbReference type="PANTHER" id="PTHR43103">
    <property type="entry name" value="NUCLEOSIDE-DIPHOSPHATE-SUGAR EPIMERASE"/>
    <property type="match status" value="1"/>
</dbReference>
<dbReference type="Pfam" id="PF01370">
    <property type="entry name" value="Epimerase"/>
    <property type="match status" value="1"/>
</dbReference>
<dbReference type="SUPFAM" id="SSF51735">
    <property type="entry name" value="NAD(P)-binding Rossmann-fold domains"/>
    <property type="match status" value="1"/>
</dbReference>
<gene>
    <name evidence="1" type="primary">hldD</name>
    <name type="ordered locus">Bamb_0929</name>
</gene>
<organism>
    <name type="scientific">Burkholderia ambifaria (strain ATCC BAA-244 / DSM 16087 / CCUG 44356 / LMG 19182 / AMMD)</name>
    <name type="common">Burkholderia cepacia (strain AMMD)</name>
    <dbReference type="NCBI Taxonomy" id="339670"/>
    <lineage>
        <taxon>Bacteria</taxon>
        <taxon>Pseudomonadati</taxon>
        <taxon>Pseudomonadota</taxon>
        <taxon>Betaproteobacteria</taxon>
        <taxon>Burkholderiales</taxon>
        <taxon>Burkholderiaceae</taxon>
        <taxon>Burkholderia</taxon>
        <taxon>Burkholderia cepacia complex</taxon>
    </lineage>
</organism>
<name>HLDD_BURCM</name>